<dbReference type="EC" id="6.3.2.1" evidence="1"/>
<dbReference type="EMBL" id="CP000872">
    <property type="protein sequence ID" value="ABX61428.1"/>
    <property type="molecule type" value="Genomic_DNA"/>
</dbReference>
<dbReference type="RefSeq" id="WP_004690555.1">
    <property type="nucleotide sequence ID" value="NC_010103.1"/>
</dbReference>
<dbReference type="SMR" id="A9M8B2"/>
<dbReference type="GeneID" id="55590103"/>
<dbReference type="KEGG" id="bcs:BCAN_A0338"/>
<dbReference type="HOGENOM" id="CLU_047148_0_0_5"/>
<dbReference type="PhylomeDB" id="A9M8B2"/>
<dbReference type="UniPathway" id="UPA00028">
    <property type="reaction ID" value="UER00005"/>
</dbReference>
<dbReference type="Proteomes" id="UP000001385">
    <property type="component" value="Chromosome I"/>
</dbReference>
<dbReference type="GO" id="GO:0005829">
    <property type="term" value="C:cytosol"/>
    <property type="evidence" value="ECO:0007669"/>
    <property type="project" value="TreeGrafter"/>
</dbReference>
<dbReference type="GO" id="GO:0005524">
    <property type="term" value="F:ATP binding"/>
    <property type="evidence" value="ECO:0007669"/>
    <property type="project" value="UniProtKB-KW"/>
</dbReference>
<dbReference type="GO" id="GO:0004592">
    <property type="term" value="F:pantoate-beta-alanine ligase activity"/>
    <property type="evidence" value="ECO:0007669"/>
    <property type="project" value="UniProtKB-UniRule"/>
</dbReference>
<dbReference type="GO" id="GO:0015940">
    <property type="term" value="P:pantothenate biosynthetic process"/>
    <property type="evidence" value="ECO:0007669"/>
    <property type="project" value="UniProtKB-UniRule"/>
</dbReference>
<dbReference type="CDD" id="cd00560">
    <property type="entry name" value="PanC"/>
    <property type="match status" value="1"/>
</dbReference>
<dbReference type="FunFam" id="3.40.50.620:FF:000013">
    <property type="entry name" value="Pantothenate synthetase"/>
    <property type="match status" value="1"/>
</dbReference>
<dbReference type="Gene3D" id="3.40.50.620">
    <property type="entry name" value="HUPs"/>
    <property type="match status" value="1"/>
</dbReference>
<dbReference type="Gene3D" id="3.30.1300.10">
    <property type="entry name" value="Pantoate-beta-alanine ligase, C-terminal domain"/>
    <property type="match status" value="1"/>
</dbReference>
<dbReference type="HAMAP" id="MF_00158">
    <property type="entry name" value="PanC"/>
    <property type="match status" value="1"/>
</dbReference>
<dbReference type="InterPro" id="IPR004821">
    <property type="entry name" value="Cyt_trans-like"/>
</dbReference>
<dbReference type="InterPro" id="IPR003721">
    <property type="entry name" value="Pantoate_ligase"/>
</dbReference>
<dbReference type="InterPro" id="IPR042176">
    <property type="entry name" value="Pantoate_ligase_C"/>
</dbReference>
<dbReference type="InterPro" id="IPR014729">
    <property type="entry name" value="Rossmann-like_a/b/a_fold"/>
</dbReference>
<dbReference type="NCBIfam" id="TIGR00125">
    <property type="entry name" value="cyt_tran_rel"/>
    <property type="match status" value="1"/>
</dbReference>
<dbReference type="NCBIfam" id="TIGR00018">
    <property type="entry name" value="panC"/>
    <property type="match status" value="1"/>
</dbReference>
<dbReference type="PANTHER" id="PTHR21299">
    <property type="entry name" value="CYTIDYLATE KINASE/PANTOATE-BETA-ALANINE LIGASE"/>
    <property type="match status" value="1"/>
</dbReference>
<dbReference type="PANTHER" id="PTHR21299:SF1">
    <property type="entry name" value="PANTOATE--BETA-ALANINE LIGASE"/>
    <property type="match status" value="1"/>
</dbReference>
<dbReference type="Pfam" id="PF02569">
    <property type="entry name" value="Pantoate_ligase"/>
    <property type="match status" value="1"/>
</dbReference>
<dbReference type="SUPFAM" id="SSF52374">
    <property type="entry name" value="Nucleotidylyl transferase"/>
    <property type="match status" value="1"/>
</dbReference>
<name>PANC_BRUC2</name>
<proteinExistence type="inferred from homology"/>
<reference key="1">
    <citation type="submission" date="2007-10" db="EMBL/GenBank/DDBJ databases">
        <title>Brucella canis ATCC 23365 whole genome shotgun sequencing project.</title>
        <authorList>
            <person name="Setubal J.C."/>
            <person name="Bowns C."/>
            <person name="Boyle S."/>
            <person name="Crasta O.R."/>
            <person name="Czar M.J."/>
            <person name="Dharmanolla C."/>
            <person name="Gillespie J.J."/>
            <person name="Kenyon R.W."/>
            <person name="Lu J."/>
            <person name="Mane S."/>
            <person name="Mohapatra S."/>
            <person name="Nagrani S."/>
            <person name="Purkayastha A."/>
            <person name="Rajasimha H.K."/>
            <person name="Shallom J.M."/>
            <person name="Shallom S."/>
            <person name="Shukla M."/>
            <person name="Snyder E.E."/>
            <person name="Sobral B.W."/>
            <person name="Wattam A.R."/>
            <person name="Will R."/>
            <person name="Williams K."/>
            <person name="Yoo H."/>
            <person name="Bruce D."/>
            <person name="Detter C."/>
            <person name="Munk C."/>
            <person name="Brettin T.S."/>
        </authorList>
    </citation>
    <scope>NUCLEOTIDE SEQUENCE [LARGE SCALE GENOMIC DNA]</scope>
    <source>
        <strain>ATCC 23365 / NCTC 10854 / RM-666</strain>
    </source>
</reference>
<protein>
    <recommendedName>
        <fullName evidence="1">Pantothenate synthetase</fullName>
        <shortName evidence="1">PS</shortName>
        <ecNumber evidence="1">6.3.2.1</ecNumber>
    </recommendedName>
    <alternativeName>
        <fullName evidence="1">Pantoate--beta-alanine ligase</fullName>
    </alternativeName>
    <alternativeName>
        <fullName evidence="1">Pantoate-activating enzyme</fullName>
    </alternativeName>
</protein>
<comment type="function">
    <text evidence="1">Catalyzes the condensation of pantoate with beta-alanine in an ATP-dependent reaction via a pantoyl-adenylate intermediate.</text>
</comment>
<comment type="catalytic activity">
    <reaction evidence="1">
        <text>(R)-pantoate + beta-alanine + ATP = (R)-pantothenate + AMP + diphosphate + H(+)</text>
        <dbReference type="Rhea" id="RHEA:10912"/>
        <dbReference type="ChEBI" id="CHEBI:15378"/>
        <dbReference type="ChEBI" id="CHEBI:15980"/>
        <dbReference type="ChEBI" id="CHEBI:29032"/>
        <dbReference type="ChEBI" id="CHEBI:30616"/>
        <dbReference type="ChEBI" id="CHEBI:33019"/>
        <dbReference type="ChEBI" id="CHEBI:57966"/>
        <dbReference type="ChEBI" id="CHEBI:456215"/>
        <dbReference type="EC" id="6.3.2.1"/>
    </reaction>
</comment>
<comment type="pathway">
    <text evidence="1">Cofactor biosynthesis; (R)-pantothenate biosynthesis; (R)-pantothenate from (R)-pantoate and beta-alanine: step 1/1.</text>
</comment>
<comment type="subunit">
    <text evidence="1">Homodimer.</text>
</comment>
<comment type="subcellular location">
    <subcellularLocation>
        <location evidence="1">Cytoplasm</location>
    </subcellularLocation>
</comment>
<comment type="miscellaneous">
    <text evidence="1">The reaction proceeds by a bi uni uni bi ping pong mechanism.</text>
</comment>
<comment type="similarity">
    <text evidence="1">Belongs to the pantothenate synthetase family.</text>
</comment>
<evidence type="ECO:0000255" key="1">
    <source>
        <dbReference type="HAMAP-Rule" id="MF_00158"/>
    </source>
</evidence>
<feature type="chain" id="PRO_1000076842" description="Pantothenate synthetase">
    <location>
        <begin position="1"/>
        <end position="293"/>
    </location>
</feature>
<feature type="active site" description="Proton donor" evidence="1">
    <location>
        <position position="37"/>
    </location>
</feature>
<feature type="binding site" evidence="1">
    <location>
        <begin position="30"/>
        <end position="37"/>
    </location>
    <ligand>
        <name>ATP</name>
        <dbReference type="ChEBI" id="CHEBI:30616"/>
    </ligand>
</feature>
<feature type="binding site" evidence="1">
    <location>
        <position position="61"/>
    </location>
    <ligand>
        <name>(R)-pantoate</name>
        <dbReference type="ChEBI" id="CHEBI:15980"/>
    </ligand>
</feature>
<feature type="binding site" evidence="1">
    <location>
        <position position="61"/>
    </location>
    <ligand>
        <name>beta-alanine</name>
        <dbReference type="ChEBI" id="CHEBI:57966"/>
    </ligand>
</feature>
<feature type="binding site" evidence="1">
    <location>
        <begin position="147"/>
        <end position="150"/>
    </location>
    <ligand>
        <name>ATP</name>
        <dbReference type="ChEBI" id="CHEBI:30616"/>
    </ligand>
</feature>
<feature type="binding site" evidence="1">
    <location>
        <position position="153"/>
    </location>
    <ligand>
        <name>(R)-pantoate</name>
        <dbReference type="ChEBI" id="CHEBI:15980"/>
    </ligand>
</feature>
<feature type="binding site" evidence="1">
    <location>
        <position position="176"/>
    </location>
    <ligand>
        <name>ATP</name>
        <dbReference type="ChEBI" id="CHEBI:30616"/>
    </ligand>
</feature>
<feature type="binding site" evidence="1">
    <location>
        <begin position="184"/>
        <end position="187"/>
    </location>
    <ligand>
        <name>ATP</name>
        <dbReference type="ChEBI" id="CHEBI:30616"/>
    </ligand>
</feature>
<gene>
    <name evidence="1" type="primary">panC</name>
    <name type="ordered locus">BCAN_A0338</name>
</gene>
<keyword id="KW-0067">ATP-binding</keyword>
<keyword id="KW-0963">Cytoplasm</keyword>
<keyword id="KW-0436">Ligase</keyword>
<keyword id="KW-0547">Nucleotide-binding</keyword>
<keyword id="KW-0566">Pantothenate biosynthesis</keyword>
<keyword id="KW-1185">Reference proteome</keyword>
<accession>A9M8B2</accession>
<organism>
    <name type="scientific">Brucella canis (strain ATCC 23365 / NCTC 10854 / RM-666)</name>
    <dbReference type="NCBI Taxonomy" id="483179"/>
    <lineage>
        <taxon>Bacteria</taxon>
        <taxon>Pseudomonadati</taxon>
        <taxon>Pseudomonadota</taxon>
        <taxon>Alphaproteobacteria</taxon>
        <taxon>Hyphomicrobiales</taxon>
        <taxon>Brucellaceae</taxon>
        <taxon>Brucella/Ochrobactrum group</taxon>
        <taxon>Brucella</taxon>
    </lineage>
</organism>
<sequence>MQIIHTIEELRQALAPARQQGKKIGFVPTMGYLHKGHLELVRRARVENDVTLVSIFVNPLQFGANEDLGRYPRDLERDAGLLHDAQVDYLFAPTVSDMYPRPMQTVVDVPPLGNQMEGEARPGHFAGVATVVSKLFNIVGPDAAYFGEKDFQQLVIIRRMVDDMAIPVRIVGVETVREDDGLACSSRNVYLTPEQRRAAIIVPQALDEADRLYRSGMDDPDALEAAIRTFISRQPLAVPEVIAIRDPETLERLPALQGRPILVALFVRVGATRLLDNRVIGHAAPQITQERAA</sequence>